<proteinExistence type="inferred from homology"/>
<evidence type="ECO:0000255" key="1">
    <source>
        <dbReference type="HAMAP-Rule" id="MF_00016"/>
    </source>
</evidence>
<protein>
    <recommendedName>
        <fullName evidence="1">Holliday junction branch migration complex subunit RuvB</fullName>
        <ecNumber evidence="1">3.6.4.-</ecNumber>
    </recommendedName>
</protein>
<comment type="function">
    <text evidence="1">The RuvA-RuvB-RuvC complex processes Holliday junction (HJ) DNA during genetic recombination and DNA repair, while the RuvA-RuvB complex plays an important role in the rescue of blocked DNA replication forks via replication fork reversal (RFR). RuvA specifically binds to HJ cruciform DNA, conferring on it an open structure. The RuvB hexamer acts as an ATP-dependent pump, pulling dsDNA into and through the RuvAB complex. RuvB forms 2 homohexamers on either side of HJ DNA bound by 1 or 2 RuvA tetramers; 4 subunits per hexamer contact DNA at a time. Coordinated motions by a converter formed by DNA-disengaged RuvB subunits stimulates ATP hydrolysis and nucleotide exchange. Immobilization of the converter enables RuvB to convert the ATP-contained energy into a lever motion, pulling 2 nucleotides of DNA out of the RuvA tetramer per ATP hydrolyzed, thus driving DNA branch migration. The RuvB motors rotate together with the DNA substrate, which together with the progressing nucleotide cycle form the mechanistic basis for DNA recombination by continuous HJ branch migration. Branch migration allows RuvC to scan DNA until it finds its consensus sequence, where it cleaves and resolves cruciform DNA.</text>
</comment>
<comment type="catalytic activity">
    <reaction evidence="1">
        <text>ATP + H2O = ADP + phosphate + H(+)</text>
        <dbReference type="Rhea" id="RHEA:13065"/>
        <dbReference type="ChEBI" id="CHEBI:15377"/>
        <dbReference type="ChEBI" id="CHEBI:15378"/>
        <dbReference type="ChEBI" id="CHEBI:30616"/>
        <dbReference type="ChEBI" id="CHEBI:43474"/>
        <dbReference type="ChEBI" id="CHEBI:456216"/>
    </reaction>
</comment>
<comment type="subunit">
    <text evidence="1">Homohexamer. Forms an RuvA(8)-RuvB(12)-Holliday junction (HJ) complex. HJ DNA is sandwiched between 2 RuvA tetramers; dsDNA enters through RuvA and exits via RuvB. An RuvB hexamer assembles on each DNA strand where it exits the tetramer. Each RuvB hexamer is contacted by two RuvA subunits (via domain III) on 2 adjacent RuvB subunits; this complex drives branch migration. In the full resolvosome a probable DNA-RuvA(4)-RuvB(12)-RuvC(2) complex forms which resolves the HJ.</text>
</comment>
<comment type="subcellular location">
    <subcellularLocation>
        <location evidence="1">Cytoplasm</location>
    </subcellularLocation>
</comment>
<comment type="domain">
    <text evidence="1">Has 3 domains, the large (RuvB-L) and small ATPase (RuvB-S) domains and the C-terminal head (RuvB-H) domain. The head domain binds DNA, while the ATPase domains jointly bind ATP, ADP or are empty depending on the state of the subunit in the translocation cycle. During a single DNA translocation step the structure of each domain remains the same, but their relative positions change.</text>
</comment>
<comment type="similarity">
    <text evidence="1">Belongs to the RuvB family.</text>
</comment>
<accession>Q8EPQ6</accession>
<feature type="chain" id="PRO_0000165568" description="Holliday junction branch migration complex subunit RuvB">
    <location>
        <begin position="1"/>
        <end position="334"/>
    </location>
</feature>
<feature type="region of interest" description="Large ATPase domain (RuvB-L)" evidence="1">
    <location>
        <begin position="1"/>
        <end position="182"/>
    </location>
</feature>
<feature type="region of interest" description="Small ATPAse domain (RuvB-S)" evidence="1">
    <location>
        <begin position="183"/>
        <end position="253"/>
    </location>
</feature>
<feature type="region of interest" description="Head domain (RuvB-H)" evidence="1">
    <location>
        <begin position="256"/>
        <end position="334"/>
    </location>
</feature>
<feature type="binding site" evidence="1">
    <location>
        <position position="21"/>
    </location>
    <ligand>
        <name>ATP</name>
        <dbReference type="ChEBI" id="CHEBI:30616"/>
    </ligand>
</feature>
<feature type="binding site" evidence="1">
    <location>
        <position position="22"/>
    </location>
    <ligand>
        <name>ATP</name>
        <dbReference type="ChEBI" id="CHEBI:30616"/>
    </ligand>
</feature>
<feature type="binding site" evidence="1">
    <location>
        <position position="63"/>
    </location>
    <ligand>
        <name>ATP</name>
        <dbReference type="ChEBI" id="CHEBI:30616"/>
    </ligand>
</feature>
<feature type="binding site" evidence="1">
    <location>
        <position position="66"/>
    </location>
    <ligand>
        <name>ATP</name>
        <dbReference type="ChEBI" id="CHEBI:30616"/>
    </ligand>
</feature>
<feature type="binding site" evidence="1">
    <location>
        <position position="67"/>
    </location>
    <ligand>
        <name>ATP</name>
        <dbReference type="ChEBI" id="CHEBI:30616"/>
    </ligand>
</feature>
<feature type="binding site" evidence="1">
    <location>
        <position position="67"/>
    </location>
    <ligand>
        <name>Mg(2+)</name>
        <dbReference type="ChEBI" id="CHEBI:18420"/>
    </ligand>
</feature>
<feature type="binding site" evidence="1">
    <location>
        <position position="68"/>
    </location>
    <ligand>
        <name>ATP</name>
        <dbReference type="ChEBI" id="CHEBI:30616"/>
    </ligand>
</feature>
<feature type="binding site" evidence="1">
    <location>
        <begin position="129"/>
        <end position="131"/>
    </location>
    <ligand>
        <name>ATP</name>
        <dbReference type="ChEBI" id="CHEBI:30616"/>
    </ligand>
</feature>
<feature type="binding site" evidence="1">
    <location>
        <position position="172"/>
    </location>
    <ligand>
        <name>ATP</name>
        <dbReference type="ChEBI" id="CHEBI:30616"/>
    </ligand>
</feature>
<feature type="binding site" evidence="1">
    <location>
        <position position="182"/>
    </location>
    <ligand>
        <name>ATP</name>
        <dbReference type="ChEBI" id="CHEBI:30616"/>
    </ligand>
</feature>
<feature type="binding site" evidence="1">
    <location>
        <position position="219"/>
    </location>
    <ligand>
        <name>ATP</name>
        <dbReference type="ChEBI" id="CHEBI:30616"/>
    </ligand>
</feature>
<feature type="binding site" evidence="1">
    <location>
        <position position="311"/>
    </location>
    <ligand>
        <name>DNA</name>
        <dbReference type="ChEBI" id="CHEBI:16991"/>
    </ligand>
</feature>
<feature type="binding site" evidence="1">
    <location>
        <position position="316"/>
    </location>
    <ligand>
        <name>DNA</name>
        <dbReference type="ChEBI" id="CHEBI:16991"/>
    </ligand>
</feature>
<reference key="1">
    <citation type="journal article" date="2002" name="Nucleic Acids Res.">
        <title>Genome sequence of Oceanobacillus iheyensis isolated from the Iheya Ridge and its unexpected adaptive capabilities to extreme environments.</title>
        <authorList>
            <person name="Takami H."/>
            <person name="Takaki Y."/>
            <person name="Uchiyama I."/>
        </authorList>
    </citation>
    <scope>NUCLEOTIDE SEQUENCE [LARGE SCALE GENOMIC DNA]</scope>
    <source>
        <strain>DSM 14371 / CIP 107618 / JCM 11309 / KCTC 3954 / HTE831</strain>
    </source>
</reference>
<organism>
    <name type="scientific">Oceanobacillus iheyensis (strain DSM 14371 / CIP 107618 / JCM 11309 / KCTC 3954 / HTE831)</name>
    <dbReference type="NCBI Taxonomy" id="221109"/>
    <lineage>
        <taxon>Bacteria</taxon>
        <taxon>Bacillati</taxon>
        <taxon>Bacillota</taxon>
        <taxon>Bacilli</taxon>
        <taxon>Bacillales</taxon>
        <taxon>Bacillaceae</taxon>
        <taxon>Oceanobacillus</taxon>
    </lineage>
</organism>
<keyword id="KW-0067">ATP-binding</keyword>
<keyword id="KW-0963">Cytoplasm</keyword>
<keyword id="KW-0227">DNA damage</keyword>
<keyword id="KW-0233">DNA recombination</keyword>
<keyword id="KW-0234">DNA repair</keyword>
<keyword id="KW-0238">DNA-binding</keyword>
<keyword id="KW-0378">Hydrolase</keyword>
<keyword id="KW-0547">Nucleotide-binding</keyword>
<keyword id="KW-1185">Reference proteome</keyword>
<gene>
    <name evidence="1" type="primary">ruvB</name>
    <name type="ordered locus">OB2036</name>
</gene>
<dbReference type="EC" id="3.6.4.-" evidence="1"/>
<dbReference type="EMBL" id="BA000028">
    <property type="protein sequence ID" value="BAC13992.1"/>
    <property type="molecule type" value="Genomic_DNA"/>
</dbReference>
<dbReference type="RefSeq" id="WP_011066431.1">
    <property type="nucleotide sequence ID" value="NC_004193.1"/>
</dbReference>
<dbReference type="SMR" id="Q8EPQ6"/>
<dbReference type="STRING" id="221109.gene:10734282"/>
<dbReference type="KEGG" id="oih:OB2036"/>
<dbReference type="eggNOG" id="COG2255">
    <property type="taxonomic scope" value="Bacteria"/>
</dbReference>
<dbReference type="HOGENOM" id="CLU_055599_1_0_9"/>
<dbReference type="OrthoDB" id="9804478at2"/>
<dbReference type="PhylomeDB" id="Q8EPQ6"/>
<dbReference type="Proteomes" id="UP000000822">
    <property type="component" value="Chromosome"/>
</dbReference>
<dbReference type="GO" id="GO:0005737">
    <property type="term" value="C:cytoplasm"/>
    <property type="evidence" value="ECO:0007669"/>
    <property type="project" value="UniProtKB-SubCell"/>
</dbReference>
<dbReference type="GO" id="GO:0048476">
    <property type="term" value="C:Holliday junction resolvase complex"/>
    <property type="evidence" value="ECO:0007669"/>
    <property type="project" value="UniProtKB-UniRule"/>
</dbReference>
<dbReference type="GO" id="GO:0005524">
    <property type="term" value="F:ATP binding"/>
    <property type="evidence" value="ECO:0007669"/>
    <property type="project" value="UniProtKB-UniRule"/>
</dbReference>
<dbReference type="GO" id="GO:0016887">
    <property type="term" value="F:ATP hydrolysis activity"/>
    <property type="evidence" value="ECO:0007669"/>
    <property type="project" value="InterPro"/>
</dbReference>
<dbReference type="GO" id="GO:0000400">
    <property type="term" value="F:four-way junction DNA binding"/>
    <property type="evidence" value="ECO:0007669"/>
    <property type="project" value="UniProtKB-UniRule"/>
</dbReference>
<dbReference type="GO" id="GO:0009378">
    <property type="term" value="F:four-way junction helicase activity"/>
    <property type="evidence" value="ECO:0007669"/>
    <property type="project" value="InterPro"/>
</dbReference>
<dbReference type="GO" id="GO:0006310">
    <property type="term" value="P:DNA recombination"/>
    <property type="evidence" value="ECO:0007669"/>
    <property type="project" value="UniProtKB-UniRule"/>
</dbReference>
<dbReference type="GO" id="GO:0006281">
    <property type="term" value="P:DNA repair"/>
    <property type="evidence" value="ECO:0007669"/>
    <property type="project" value="UniProtKB-UniRule"/>
</dbReference>
<dbReference type="CDD" id="cd00009">
    <property type="entry name" value="AAA"/>
    <property type="match status" value="1"/>
</dbReference>
<dbReference type="Gene3D" id="1.10.8.60">
    <property type="match status" value="1"/>
</dbReference>
<dbReference type="Gene3D" id="3.40.50.300">
    <property type="entry name" value="P-loop containing nucleotide triphosphate hydrolases"/>
    <property type="match status" value="1"/>
</dbReference>
<dbReference type="Gene3D" id="1.10.10.10">
    <property type="entry name" value="Winged helix-like DNA-binding domain superfamily/Winged helix DNA-binding domain"/>
    <property type="match status" value="1"/>
</dbReference>
<dbReference type="HAMAP" id="MF_00016">
    <property type="entry name" value="DNA_HJ_migration_RuvB"/>
    <property type="match status" value="1"/>
</dbReference>
<dbReference type="InterPro" id="IPR003593">
    <property type="entry name" value="AAA+_ATPase"/>
</dbReference>
<dbReference type="InterPro" id="IPR041445">
    <property type="entry name" value="AAA_lid_4"/>
</dbReference>
<dbReference type="InterPro" id="IPR004605">
    <property type="entry name" value="DNA_helicase_Holl-junc_RuvB"/>
</dbReference>
<dbReference type="InterPro" id="IPR027417">
    <property type="entry name" value="P-loop_NTPase"/>
</dbReference>
<dbReference type="InterPro" id="IPR008824">
    <property type="entry name" value="RuvB-like_N"/>
</dbReference>
<dbReference type="InterPro" id="IPR008823">
    <property type="entry name" value="RuvB_C"/>
</dbReference>
<dbReference type="InterPro" id="IPR036388">
    <property type="entry name" value="WH-like_DNA-bd_sf"/>
</dbReference>
<dbReference type="InterPro" id="IPR036390">
    <property type="entry name" value="WH_DNA-bd_sf"/>
</dbReference>
<dbReference type="NCBIfam" id="NF000868">
    <property type="entry name" value="PRK00080.1"/>
    <property type="match status" value="1"/>
</dbReference>
<dbReference type="NCBIfam" id="TIGR00635">
    <property type="entry name" value="ruvB"/>
    <property type="match status" value="1"/>
</dbReference>
<dbReference type="PANTHER" id="PTHR42848">
    <property type="match status" value="1"/>
</dbReference>
<dbReference type="PANTHER" id="PTHR42848:SF1">
    <property type="entry name" value="HOLLIDAY JUNCTION BRANCH MIGRATION COMPLEX SUBUNIT RUVB"/>
    <property type="match status" value="1"/>
</dbReference>
<dbReference type="Pfam" id="PF17864">
    <property type="entry name" value="AAA_lid_4"/>
    <property type="match status" value="1"/>
</dbReference>
<dbReference type="Pfam" id="PF05491">
    <property type="entry name" value="RuvB_C"/>
    <property type="match status" value="1"/>
</dbReference>
<dbReference type="Pfam" id="PF05496">
    <property type="entry name" value="RuvB_N"/>
    <property type="match status" value="1"/>
</dbReference>
<dbReference type="SMART" id="SM00382">
    <property type="entry name" value="AAA"/>
    <property type="match status" value="1"/>
</dbReference>
<dbReference type="SUPFAM" id="SSF52540">
    <property type="entry name" value="P-loop containing nucleoside triphosphate hydrolases"/>
    <property type="match status" value="1"/>
</dbReference>
<dbReference type="SUPFAM" id="SSF46785">
    <property type="entry name" value="Winged helix' DNA-binding domain"/>
    <property type="match status" value="1"/>
</dbReference>
<name>RUVB_OCEIH</name>
<sequence>MDDRMIDGELQDQDVEIELSLRPSTLSQYIGQDKVKENLTIFIQAAKMREEPLDHVLLYGPPGLGKTTLASIISYEMGVQFRSTSGPAIERAGDLAAILSSLEPGDVLFIDEVHRLPRSVEEVLYAAMEDFFIDIVIGTGPSARSVRIDLPPFTLVGATTRAGLLSAPLRDRFGVLSRLEYYEIKDLCNIVERTADIFNMPISSEAAIEVARRSRGTPRIANRLLKRVRDISQVKGEEEISLESTKQALEMLQVDDAGLDHVDHKLLTGIIEGFSGGPVGLDTIAATIGEESQTIEEVYEPFLLQLGFIQRTPRGRVITSKAYDHLGIKRTGED</sequence>